<name>CSRA_OCEIH</name>
<evidence type="ECO:0000255" key="1">
    <source>
        <dbReference type="HAMAP-Rule" id="MF_00167"/>
    </source>
</evidence>
<gene>
    <name evidence="1" type="primary">csrA</name>
    <name type="ordered locus">OB2503</name>
</gene>
<dbReference type="EMBL" id="BA000028">
    <property type="protein sequence ID" value="BAC14459.1"/>
    <property type="molecule type" value="Genomic_DNA"/>
</dbReference>
<dbReference type="RefSeq" id="WP_011066896.1">
    <property type="nucleotide sequence ID" value="NC_004193.1"/>
</dbReference>
<dbReference type="SMR" id="Q8ENI0"/>
<dbReference type="STRING" id="221109.gene:10734755"/>
<dbReference type="KEGG" id="oih:OB2503"/>
<dbReference type="eggNOG" id="COG1551">
    <property type="taxonomic scope" value="Bacteria"/>
</dbReference>
<dbReference type="HOGENOM" id="CLU_164837_0_1_9"/>
<dbReference type="OrthoDB" id="9809061at2"/>
<dbReference type="PhylomeDB" id="Q8ENI0"/>
<dbReference type="Proteomes" id="UP000000822">
    <property type="component" value="Chromosome"/>
</dbReference>
<dbReference type="GO" id="GO:0005829">
    <property type="term" value="C:cytosol"/>
    <property type="evidence" value="ECO:0007669"/>
    <property type="project" value="TreeGrafter"/>
</dbReference>
<dbReference type="GO" id="GO:0048027">
    <property type="term" value="F:mRNA 5'-UTR binding"/>
    <property type="evidence" value="ECO:0007669"/>
    <property type="project" value="UniProtKB-UniRule"/>
</dbReference>
<dbReference type="GO" id="GO:0044781">
    <property type="term" value="P:bacterial-type flagellum organization"/>
    <property type="evidence" value="ECO:0007669"/>
    <property type="project" value="UniProtKB-KW"/>
</dbReference>
<dbReference type="GO" id="GO:0006402">
    <property type="term" value="P:mRNA catabolic process"/>
    <property type="evidence" value="ECO:0007669"/>
    <property type="project" value="InterPro"/>
</dbReference>
<dbReference type="GO" id="GO:0045947">
    <property type="term" value="P:negative regulation of translational initiation"/>
    <property type="evidence" value="ECO:0007669"/>
    <property type="project" value="UniProtKB-UniRule"/>
</dbReference>
<dbReference type="GO" id="GO:1902208">
    <property type="term" value="P:regulation of bacterial-type flagellum assembly"/>
    <property type="evidence" value="ECO:0007669"/>
    <property type="project" value="UniProtKB-UniRule"/>
</dbReference>
<dbReference type="GO" id="GO:0006109">
    <property type="term" value="P:regulation of carbohydrate metabolic process"/>
    <property type="evidence" value="ECO:0007669"/>
    <property type="project" value="InterPro"/>
</dbReference>
<dbReference type="FunFam" id="2.60.40.4380:FF:000002">
    <property type="entry name" value="Translational regulator CsrA"/>
    <property type="match status" value="1"/>
</dbReference>
<dbReference type="Gene3D" id="2.60.40.4380">
    <property type="entry name" value="Translational regulator CsrA"/>
    <property type="match status" value="1"/>
</dbReference>
<dbReference type="HAMAP" id="MF_00167">
    <property type="entry name" value="CsrA"/>
    <property type="match status" value="1"/>
</dbReference>
<dbReference type="InterPro" id="IPR003751">
    <property type="entry name" value="CsrA"/>
</dbReference>
<dbReference type="InterPro" id="IPR036107">
    <property type="entry name" value="CsrA_sf"/>
</dbReference>
<dbReference type="NCBIfam" id="TIGR00202">
    <property type="entry name" value="csrA"/>
    <property type="match status" value="1"/>
</dbReference>
<dbReference type="NCBIfam" id="NF002469">
    <property type="entry name" value="PRK01712.1"/>
    <property type="match status" value="1"/>
</dbReference>
<dbReference type="PANTHER" id="PTHR34984">
    <property type="entry name" value="CARBON STORAGE REGULATOR"/>
    <property type="match status" value="1"/>
</dbReference>
<dbReference type="PANTHER" id="PTHR34984:SF1">
    <property type="entry name" value="CARBON STORAGE REGULATOR"/>
    <property type="match status" value="1"/>
</dbReference>
<dbReference type="Pfam" id="PF02599">
    <property type="entry name" value="CsrA"/>
    <property type="match status" value="1"/>
</dbReference>
<dbReference type="SUPFAM" id="SSF117130">
    <property type="entry name" value="CsrA-like"/>
    <property type="match status" value="1"/>
</dbReference>
<organism>
    <name type="scientific">Oceanobacillus iheyensis (strain DSM 14371 / CIP 107618 / JCM 11309 / KCTC 3954 / HTE831)</name>
    <dbReference type="NCBI Taxonomy" id="221109"/>
    <lineage>
        <taxon>Bacteria</taxon>
        <taxon>Bacillati</taxon>
        <taxon>Bacillota</taxon>
        <taxon>Bacilli</taxon>
        <taxon>Bacillales</taxon>
        <taxon>Bacillaceae</taxon>
        <taxon>Oceanobacillus</taxon>
    </lineage>
</organism>
<comment type="function">
    <text evidence="1">A translational regulator that binds mRNA to regulate translation initiation and/or mRNA stability. Usually binds in the 5'-UTR at or near the Shine-Dalgarno sequence preventing ribosome-binding, thus repressing translation. Its main target seems to be the major flagellin gene, while its function is anatagonized by FliW.</text>
</comment>
<comment type="subunit">
    <text evidence="1">Homodimer; the beta-strands of each monomer intercalate to form a hydrophobic core, while the alpha-helices form wings that extend away from the core.</text>
</comment>
<comment type="subcellular location">
    <subcellularLocation>
        <location evidence="1">Cytoplasm</location>
    </subcellularLocation>
</comment>
<comment type="similarity">
    <text evidence="1">Belongs to the CsrA/RsmA family.</text>
</comment>
<accession>Q8ENI0</accession>
<keyword id="KW-1005">Bacterial flagellum biogenesis</keyword>
<keyword id="KW-0963">Cytoplasm</keyword>
<keyword id="KW-1185">Reference proteome</keyword>
<keyword id="KW-0678">Repressor</keyword>
<keyword id="KW-0694">RNA-binding</keyword>
<keyword id="KW-0810">Translation regulation</keyword>
<feature type="chain" id="PRO_0000177075" description="Translational regulator CsrA">
    <location>
        <begin position="1"/>
        <end position="74"/>
    </location>
</feature>
<sequence>MLVLTRKQSEAIQIGEDIEIEVIAIEGEQVKLGIRAPKSVDIYRKEIYVDITNQNNEAAIIDKNLLQFLKNNNS</sequence>
<protein>
    <recommendedName>
        <fullName evidence="1">Translational regulator CsrA</fullName>
    </recommendedName>
</protein>
<proteinExistence type="inferred from homology"/>
<reference key="1">
    <citation type="journal article" date="2002" name="Nucleic Acids Res.">
        <title>Genome sequence of Oceanobacillus iheyensis isolated from the Iheya Ridge and its unexpected adaptive capabilities to extreme environments.</title>
        <authorList>
            <person name="Takami H."/>
            <person name="Takaki Y."/>
            <person name="Uchiyama I."/>
        </authorList>
    </citation>
    <scope>NUCLEOTIDE SEQUENCE [LARGE SCALE GENOMIC DNA]</scope>
    <source>
        <strain>DSM 14371 / CIP 107618 / JCM 11309 / KCTC 3954 / HTE831</strain>
    </source>
</reference>